<keyword id="KW-0963">Cytoplasm</keyword>
<keyword id="KW-0255">Endonuclease</keyword>
<keyword id="KW-0378">Hydrolase</keyword>
<keyword id="KW-0464">Manganese</keyword>
<keyword id="KW-0479">Metal-binding</keyword>
<keyword id="KW-0540">Nuclease</keyword>
<sequence>MNDNDNIDKDNIDTMNDNNKLIIGLDEAGRGPVLGPMVIALVKIKGQDLKNFEKLDIKDSKKHSKNRREELFEMIINNYDVRYEILEAKTIDKLMNTINLNKIELMAFTKLINSVLKEEYPNYKENSKIQTATPQIEIYIDACSSNEKAFANQIKSKLIVNDENNIKIIAEHKADENYKIVSAASIIAKVIRDRKIEEYKKIYGEIGSGYPSDKITQKYLANYVEKNRELPEIARKSWNTSKKLLKKIEDKNTVDKIKDSKRIKTNIELKQTKLVEF</sequence>
<gene>
    <name evidence="1" type="primary">rnhB</name>
    <name type="ordered locus">Maeo_0608</name>
</gene>
<feature type="chain" id="PRO_0000334979" description="Ribonuclease HII">
    <location>
        <begin position="1"/>
        <end position="277"/>
    </location>
</feature>
<feature type="domain" description="RNase H type-2" evidence="2">
    <location>
        <begin position="20"/>
        <end position="250"/>
    </location>
</feature>
<feature type="binding site" evidence="1">
    <location>
        <position position="26"/>
    </location>
    <ligand>
        <name>a divalent metal cation</name>
        <dbReference type="ChEBI" id="CHEBI:60240"/>
    </ligand>
</feature>
<feature type="binding site" evidence="1">
    <location>
        <position position="27"/>
    </location>
    <ligand>
        <name>a divalent metal cation</name>
        <dbReference type="ChEBI" id="CHEBI:60240"/>
    </ligand>
</feature>
<feature type="binding site" evidence="1">
    <location>
        <position position="141"/>
    </location>
    <ligand>
        <name>a divalent metal cation</name>
        <dbReference type="ChEBI" id="CHEBI:60240"/>
    </ligand>
</feature>
<proteinExistence type="inferred from homology"/>
<accession>A6UUM1</accession>
<evidence type="ECO:0000255" key="1">
    <source>
        <dbReference type="HAMAP-Rule" id="MF_00052"/>
    </source>
</evidence>
<evidence type="ECO:0000255" key="2">
    <source>
        <dbReference type="PROSITE-ProRule" id="PRU01319"/>
    </source>
</evidence>
<reference key="1">
    <citation type="submission" date="2007-06" db="EMBL/GenBank/DDBJ databases">
        <title>Complete sequence of Methanococcus aeolicus Nankai-3.</title>
        <authorList>
            <consortium name="US DOE Joint Genome Institute"/>
            <person name="Copeland A."/>
            <person name="Lucas S."/>
            <person name="Lapidus A."/>
            <person name="Barry K."/>
            <person name="Glavina del Rio T."/>
            <person name="Dalin E."/>
            <person name="Tice H."/>
            <person name="Pitluck S."/>
            <person name="Chain P."/>
            <person name="Malfatti S."/>
            <person name="Shin M."/>
            <person name="Vergez L."/>
            <person name="Schmutz J."/>
            <person name="Larimer F."/>
            <person name="Land M."/>
            <person name="Hauser L."/>
            <person name="Kyrpides N."/>
            <person name="Lykidis A."/>
            <person name="Sieprawska-Lupa M."/>
            <person name="Whitman W.B."/>
            <person name="Richardson P."/>
        </authorList>
    </citation>
    <scope>NUCLEOTIDE SEQUENCE [LARGE SCALE GENOMIC DNA]</scope>
    <source>
        <strain>ATCC BAA-1280 / DSM 17508 / OCM 812 / Nankai-3</strain>
    </source>
</reference>
<name>RNH2_META3</name>
<protein>
    <recommendedName>
        <fullName evidence="1">Ribonuclease HII</fullName>
        <shortName evidence="1">RNase HII</shortName>
        <ecNumber evidence="1">3.1.26.4</ecNumber>
    </recommendedName>
</protein>
<organism>
    <name type="scientific">Methanococcus aeolicus (strain ATCC BAA-1280 / DSM 17508 / OCM 812 / Nankai-3)</name>
    <dbReference type="NCBI Taxonomy" id="419665"/>
    <lineage>
        <taxon>Archaea</taxon>
        <taxon>Methanobacteriati</taxon>
        <taxon>Methanobacteriota</taxon>
        <taxon>Methanomada group</taxon>
        <taxon>Methanococci</taxon>
        <taxon>Methanococcales</taxon>
        <taxon>Methanococcaceae</taxon>
        <taxon>Methanococcus</taxon>
    </lineage>
</organism>
<comment type="function">
    <text evidence="1">Endonuclease that specifically degrades the RNA of RNA-DNA hybrids.</text>
</comment>
<comment type="catalytic activity">
    <reaction evidence="1">
        <text>Endonucleolytic cleavage to 5'-phosphomonoester.</text>
        <dbReference type="EC" id="3.1.26.4"/>
    </reaction>
</comment>
<comment type="cofactor">
    <cofactor evidence="1">
        <name>Mn(2+)</name>
        <dbReference type="ChEBI" id="CHEBI:29035"/>
    </cofactor>
    <cofactor evidence="1">
        <name>Mg(2+)</name>
        <dbReference type="ChEBI" id="CHEBI:18420"/>
    </cofactor>
    <text evidence="1">Manganese or magnesium. Binds 1 divalent metal ion per monomer in the absence of substrate. May bind a second metal ion after substrate binding.</text>
</comment>
<comment type="subcellular location">
    <subcellularLocation>
        <location evidence="1">Cytoplasm</location>
    </subcellularLocation>
</comment>
<comment type="similarity">
    <text evidence="1">Belongs to the RNase HII family.</text>
</comment>
<dbReference type="EC" id="3.1.26.4" evidence="1"/>
<dbReference type="EMBL" id="CP000743">
    <property type="protein sequence ID" value="ABR56193.1"/>
    <property type="molecule type" value="Genomic_DNA"/>
</dbReference>
<dbReference type="RefSeq" id="WP_011973325.1">
    <property type="nucleotide sequence ID" value="NC_009635.1"/>
</dbReference>
<dbReference type="SMR" id="A6UUM1"/>
<dbReference type="STRING" id="419665.Maeo_0608"/>
<dbReference type="GeneID" id="5327382"/>
<dbReference type="GeneID" id="75305678"/>
<dbReference type="KEGG" id="mae:Maeo_0608"/>
<dbReference type="eggNOG" id="arCOG04121">
    <property type="taxonomic scope" value="Archaea"/>
</dbReference>
<dbReference type="HOGENOM" id="CLU_036532_0_4_2"/>
<dbReference type="OrthoDB" id="33866at2157"/>
<dbReference type="Proteomes" id="UP000001106">
    <property type="component" value="Chromosome"/>
</dbReference>
<dbReference type="GO" id="GO:0005737">
    <property type="term" value="C:cytoplasm"/>
    <property type="evidence" value="ECO:0007669"/>
    <property type="project" value="UniProtKB-SubCell"/>
</dbReference>
<dbReference type="GO" id="GO:0032299">
    <property type="term" value="C:ribonuclease H2 complex"/>
    <property type="evidence" value="ECO:0007669"/>
    <property type="project" value="TreeGrafter"/>
</dbReference>
<dbReference type="GO" id="GO:0030145">
    <property type="term" value="F:manganese ion binding"/>
    <property type="evidence" value="ECO:0007669"/>
    <property type="project" value="UniProtKB-UniRule"/>
</dbReference>
<dbReference type="GO" id="GO:0003723">
    <property type="term" value="F:RNA binding"/>
    <property type="evidence" value="ECO:0007669"/>
    <property type="project" value="InterPro"/>
</dbReference>
<dbReference type="GO" id="GO:0004523">
    <property type="term" value="F:RNA-DNA hybrid ribonuclease activity"/>
    <property type="evidence" value="ECO:0007669"/>
    <property type="project" value="UniProtKB-UniRule"/>
</dbReference>
<dbReference type="GO" id="GO:0043137">
    <property type="term" value="P:DNA replication, removal of RNA primer"/>
    <property type="evidence" value="ECO:0007669"/>
    <property type="project" value="TreeGrafter"/>
</dbReference>
<dbReference type="GO" id="GO:0006298">
    <property type="term" value="P:mismatch repair"/>
    <property type="evidence" value="ECO:0007669"/>
    <property type="project" value="TreeGrafter"/>
</dbReference>
<dbReference type="CDD" id="cd07180">
    <property type="entry name" value="RNase_HII_archaea_like"/>
    <property type="match status" value="1"/>
</dbReference>
<dbReference type="FunFam" id="1.10.10.460:FF:000001">
    <property type="entry name" value="Ribonuclease"/>
    <property type="match status" value="1"/>
</dbReference>
<dbReference type="Gene3D" id="3.30.420.10">
    <property type="entry name" value="Ribonuclease H-like superfamily/Ribonuclease H"/>
    <property type="match status" value="1"/>
</dbReference>
<dbReference type="Gene3D" id="1.10.10.460">
    <property type="entry name" value="Ribonuclease hii. Domain 2"/>
    <property type="match status" value="1"/>
</dbReference>
<dbReference type="HAMAP" id="MF_00052_A">
    <property type="entry name" value="RNase_HII_A"/>
    <property type="match status" value="1"/>
</dbReference>
<dbReference type="InterPro" id="IPR004649">
    <property type="entry name" value="RNase_H2_suA"/>
</dbReference>
<dbReference type="InterPro" id="IPR001352">
    <property type="entry name" value="RNase_HII/HIII"/>
</dbReference>
<dbReference type="InterPro" id="IPR024567">
    <property type="entry name" value="RNase_HII/HIII_dom"/>
</dbReference>
<dbReference type="InterPro" id="IPR020787">
    <property type="entry name" value="RNase_HII_arc"/>
</dbReference>
<dbReference type="InterPro" id="IPR023160">
    <property type="entry name" value="RNase_HII_hlx-loop-hlx_cap_dom"/>
</dbReference>
<dbReference type="InterPro" id="IPR012337">
    <property type="entry name" value="RNaseH-like_sf"/>
</dbReference>
<dbReference type="InterPro" id="IPR036397">
    <property type="entry name" value="RNaseH_sf"/>
</dbReference>
<dbReference type="NCBIfam" id="TIGR00729">
    <property type="entry name" value="ribonuclease HII"/>
    <property type="match status" value="1"/>
</dbReference>
<dbReference type="PANTHER" id="PTHR10954:SF23">
    <property type="entry name" value="RIBONUCLEASE"/>
    <property type="match status" value="1"/>
</dbReference>
<dbReference type="PANTHER" id="PTHR10954">
    <property type="entry name" value="RIBONUCLEASE H2 SUBUNIT A"/>
    <property type="match status" value="1"/>
</dbReference>
<dbReference type="Pfam" id="PF01351">
    <property type="entry name" value="RNase_HII"/>
    <property type="match status" value="1"/>
</dbReference>
<dbReference type="SUPFAM" id="SSF53098">
    <property type="entry name" value="Ribonuclease H-like"/>
    <property type="match status" value="1"/>
</dbReference>
<dbReference type="PROSITE" id="PS51975">
    <property type="entry name" value="RNASE_H_2"/>
    <property type="match status" value="1"/>
</dbReference>